<keyword id="KW-0002">3D-structure</keyword>
<keyword id="KW-1185">Reference proteome</keyword>
<evidence type="ECO:0000255" key="1">
    <source>
        <dbReference type="PROSITE-ProRule" id="PRU00464"/>
    </source>
</evidence>
<evidence type="ECO:0007829" key="2">
    <source>
        <dbReference type="PDB" id="4ZGL"/>
    </source>
</evidence>
<protein>
    <recommendedName>
        <fullName>Uncharacterized HIT-like protein HP_0404</fullName>
    </recommendedName>
</protein>
<proteinExistence type="evidence at protein level"/>
<dbReference type="EMBL" id="AE000511">
    <property type="protein sequence ID" value="AAD07473.1"/>
    <property type="molecule type" value="Genomic_DNA"/>
</dbReference>
<dbReference type="PIR" id="D64570">
    <property type="entry name" value="D64570"/>
</dbReference>
<dbReference type="RefSeq" id="NP_207202.1">
    <property type="nucleotide sequence ID" value="NC_000915.1"/>
</dbReference>
<dbReference type="RefSeq" id="WP_001100349.1">
    <property type="nucleotide sequence ID" value="NC_018939.1"/>
</dbReference>
<dbReference type="PDB" id="4ZGL">
    <property type="method" value="X-ray"/>
    <property type="resolution" value="2.95 A"/>
    <property type="chains" value="A/B/C/D/E/F/G/H/I/J=1-104"/>
</dbReference>
<dbReference type="PDBsum" id="4ZGL"/>
<dbReference type="SMR" id="P64382"/>
<dbReference type="FunCoup" id="P64382">
    <property type="interactions" value="347"/>
</dbReference>
<dbReference type="STRING" id="85962.HP_0404"/>
<dbReference type="PaxDb" id="85962-C694_02055"/>
<dbReference type="EnsemblBacteria" id="AAD07473">
    <property type="protein sequence ID" value="AAD07473"/>
    <property type="gene ID" value="HP_0404"/>
</dbReference>
<dbReference type="KEGG" id="heo:C694_02055"/>
<dbReference type="KEGG" id="hpy:HP_0404"/>
<dbReference type="PATRIC" id="fig|85962.47.peg.428"/>
<dbReference type="eggNOG" id="COG0537">
    <property type="taxonomic scope" value="Bacteria"/>
</dbReference>
<dbReference type="InParanoid" id="P64382"/>
<dbReference type="OrthoDB" id="9784774at2"/>
<dbReference type="PhylomeDB" id="P64382"/>
<dbReference type="EvolutionaryTrace" id="P64382"/>
<dbReference type="Proteomes" id="UP000000429">
    <property type="component" value="Chromosome"/>
</dbReference>
<dbReference type="GO" id="GO:0005737">
    <property type="term" value="C:cytoplasm"/>
    <property type="evidence" value="ECO:0000318"/>
    <property type="project" value="GO_Central"/>
</dbReference>
<dbReference type="GO" id="GO:0005829">
    <property type="term" value="C:cytosol"/>
    <property type="evidence" value="ECO:0000318"/>
    <property type="project" value="GO_Central"/>
</dbReference>
<dbReference type="GO" id="GO:0043530">
    <property type="term" value="F:adenosine 5'-monophosphoramidase activity"/>
    <property type="evidence" value="ECO:0000318"/>
    <property type="project" value="GO_Central"/>
</dbReference>
<dbReference type="GO" id="GO:0055130">
    <property type="term" value="P:D-alanine catabolic process"/>
    <property type="evidence" value="ECO:0000318"/>
    <property type="project" value="GO_Central"/>
</dbReference>
<dbReference type="CDD" id="cd01276">
    <property type="entry name" value="PKCI_related"/>
    <property type="match status" value="1"/>
</dbReference>
<dbReference type="Gene3D" id="3.30.428.10">
    <property type="entry name" value="HIT-like"/>
    <property type="match status" value="1"/>
</dbReference>
<dbReference type="InterPro" id="IPR019808">
    <property type="entry name" value="Histidine_triad_CS"/>
</dbReference>
<dbReference type="InterPro" id="IPR001310">
    <property type="entry name" value="Histidine_triad_HIT"/>
</dbReference>
<dbReference type="InterPro" id="IPR011146">
    <property type="entry name" value="HIT-like"/>
</dbReference>
<dbReference type="InterPro" id="IPR036265">
    <property type="entry name" value="HIT-like_sf"/>
</dbReference>
<dbReference type="PANTHER" id="PTHR23089">
    <property type="entry name" value="HISTIDINE TRIAD HIT PROTEIN"/>
    <property type="match status" value="1"/>
</dbReference>
<dbReference type="Pfam" id="PF01230">
    <property type="entry name" value="HIT"/>
    <property type="match status" value="1"/>
</dbReference>
<dbReference type="PRINTS" id="PR00332">
    <property type="entry name" value="HISTRIAD"/>
</dbReference>
<dbReference type="SUPFAM" id="SSF54197">
    <property type="entry name" value="HIT-like"/>
    <property type="match status" value="1"/>
</dbReference>
<dbReference type="PROSITE" id="PS00892">
    <property type="entry name" value="HIT_1"/>
    <property type="match status" value="1"/>
</dbReference>
<dbReference type="PROSITE" id="PS51084">
    <property type="entry name" value="HIT_2"/>
    <property type="match status" value="1"/>
</dbReference>
<gene>
    <name type="ordered locus">HP_0404</name>
</gene>
<accession>P64382</accession>
<accession>P56147</accession>
<feature type="chain" id="PRO_0000109818" description="Uncharacterized HIT-like protein HP_0404">
    <location>
        <begin position="1"/>
        <end position="104"/>
    </location>
</feature>
<feature type="domain" description="HIT" evidence="1">
    <location>
        <begin position="3"/>
        <end position="104"/>
    </location>
</feature>
<feature type="short sequence motif" description="Histidine triad motif">
    <location>
        <begin position="93"/>
        <end position="97"/>
    </location>
</feature>
<feature type="helix" evidence="2">
    <location>
        <begin position="3"/>
        <end position="8"/>
    </location>
</feature>
<feature type="strand" evidence="2">
    <location>
        <begin position="16"/>
        <end position="19"/>
    </location>
</feature>
<feature type="strand" evidence="2">
    <location>
        <begin position="21"/>
        <end position="27"/>
    </location>
</feature>
<feature type="strand" evidence="2">
    <location>
        <begin position="32"/>
        <end position="43"/>
    </location>
</feature>
<feature type="helix" evidence="2">
    <location>
        <begin position="48"/>
        <end position="50"/>
    </location>
</feature>
<feature type="helix" evidence="2">
    <location>
        <begin position="53"/>
        <end position="69"/>
    </location>
</feature>
<feature type="turn" evidence="2">
    <location>
        <begin position="73"/>
        <end position="75"/>
    </location>
</feature>
<feature type="strand" evidence="2">
    <location>
        <begin position="77"/>
        <end position="84"/>
    </location>
</feature>
<feature type="helix" evidence="2">
    <location>
        <begin position="85"/>
        <end position="87"/>
    </location>
</feature>
<feature type="strand" evidence="2">
    <location>
        <begin position="91"/>
        <end position="93"/>
    </location>
</feature>
<feature type="strand" evidence="2">
    <location>
        <begin position="96"/>
        <end position="100"/>
    </location>
</feature>
<reference key="1">
    <citation type="journal article" date="1997" name="Nature">
        <title>The complete genome sequence of the gastric pathogen Helicobacter pylori.</title>
        <authorList>
            <person name="Tomb J.-F."/>
            <person name="White O."/>
            <person name="Kerlavage A.R."/>
            <person name="Clayton R.A."/>
            <person name="Sutton G.G."/>
            <person name="Fleischmann R.D."/>
            <person name="Ketchum K.A."/>
            <person name="Klenk H.-P."/>
            <person name="Gill S.R."/>
            <person name="Dougherty B.A."/>
            <person name="Nelson K.E."/>
            <person name="Quackenbush J."/>
            <person name="Zhou L."/>
            <person name="Kirkness E.F."/>
            <person name="Peterson S.N."/>
            <person name="Loftus B.J."/>
            <person name="Richardson D.L."/>
            <person name="Dodson R.J."/>
            <person name="Khalak H.G."/>
            <person name="Glodek A."/>
            <person name="McKenney K."/>
            <person name="FitzGerald L.M."/>
            <person name="Lee N."/>
            <person name="Adams M.D."/>
            <person name="Hickey E.K."/>
            <person name="Berg D.E."/>
            <person name="Gocayne J.D."/>
            <person name="Utterback T.R."/>
            <person name="Peterson J.D."/>
            <person name="Kelley J.M."/>
            <person name="Cotton M.D."/>
            <person name="Weidman J.F."/>
            <person name="Fujii C."/>
            <person name="Bowman C."/>
            <person name="Watthey L."/>
            <person name="Wallin E."/>
            <person name="Hayes W.S."/>
            <person name="Borodovsky M."/>
            <person name="Karp P.D."/>
            <person name="Smith H.O."/>
            <person name="Fraser C.M."/>
            <person name="Venter J.C."/>
        </authorList>
    </citation>
    <scope>NUCLEOTIDE SEQUENCE [LARGE SCALE GENOMIC DNA]</scope>
    <source>
        <strain>ATCC 700392 / 26695</strain>
    </source>
</reference>
<name>YHIT_HELPY</name>
<sequence>MNVFEKIIQGEIPCSKILENERFLSFYDINPKAKVHALVIPKQSIQDFNGITPELMAQMTSFIFEVVEKLGIKEKGYKLLTNVGKNAGQEVMHLHFHILSGDKH</sequence>
<organism>
    <name type="scientific">Helicobacter pylori (strain ATCC 700392 / 26695)</name>
    <name type="common">Campylobacter pylori</name>
    <dbReference type="NCBI Taxonomy" id="85962"/>
    <lineage>
        <taxon>Bacteria</taxon>
        <taxon>Pseudomonadati</taxon>
        <taxon>Campylobacterota</taxon>
        <taxon>Epsilonproteobacteria</taxon>
        <taxon>Campylobacterales</taxon>
        <taxon>Helicobacteraceae</taxon>
        <taxon>Helicobacter</taxon>
    </lineage>
</organism>